<keyword id="KW-0963">Cytoplasm</keyword>
<keyword id="KW-0271">Exosome</keyword>
<keyword id="KW-0539">Nucleus</keyword>
<keyword id="KW-1185">Reference proteome</keyword>
<keyword id="KW-0694">RNA-binding</keyword>
<keyword id="KW-0698">rRNA processing</keyword>
<sequence>MNRIGILSRSDGSSEWKQGSARVICGVNGPIDVKIRDERLNKATVEVLVQPVSGVAETLEKMISSRIVGILEDAIFLNTYPRTLIQVSIQIIEEDGTDTLAAVINGAVLALLDAGISLKYIPCAINCHWKNKITQDEPDVDGTINKLESIITICYSISSEPAKLIFLETAGPIPEEDFFRVLETAPLHAEEVSKKMKELLFETYNESDGHENEKNPKEDVEMDVVA</sequence>
<organism>
    <name type="scientific">Schizosaccharomyces pombe (strain 972 / ATCC 24843)</name>
    <name type="common">Fission yeast</name>
    <dbReference type="NCBI Taxonomy" id="284812"/>
    <lineage>
        <taxon>Eukaryota</taxon>
        <taxon>Fungi</taxon>
        <taxon>Dikarya</taxon>
        <taxon>Ascomycota</taxon>
        <taxon>Taphrinomycotina</taxon>
        <taxon>Schizosaccharomycetes</taxon>
        <taxon>Schizosaccharomycetales</taxon>
        <taxon>Schizosaccharomycetaceae</taxon>
        <taxon>Schizosaccharomyces</taxon>
    </lineage>
</organism>
<comment type="function">
    <text evidence="1">Non-catalytic component of the RNA exosome complex which has 3'-&gt;5' exoribonuclease activity and participates in a multitude of cellular RNA processing and degradation events. In the nucleus, the RNA exosome complex is involved in proper maturation of stable RNA species such as rRNA, snRNA and snoRNA, in the elimination of RNA processing by-products and non-coding 'pervasive' transcripts, such as antisense RNA species and cryptic unstable transcripts (CUTs), and of mRNAs with processing defects, thereby limiting or excluding their export to the cytoplasm. In the cytoplasm, the RNA exosome complex is involved in general mRNA turnover and in RNA surveillance pathways, preventing translation of aberrant mRNAs. The catalytic inactive RNA exosome core complex of 9 subunits (Exo-9) is proposed to play a pivotal role in the binding and presentation of RNA for ribonucleolysis, and to serve as a scaffold for the association with catalytic subunits and accessory proteins or complexes. ski6 is part of the hexameric ring of RNase PH domain-containing subunits proposed to form a central channel which threads RNA substrates for degradation (By similarity).</text>
</comment>
<comment type="subunit">
    <text evidence="1">Component of the RNA exosome complex. Specifically part of the catalytically inactive RNA exosome core complex (Exo-9) which may associate with the catalytic subunits rrp6 and dis3 in cytoplasmic- and nuclear-specific RNA exosome complex forms. Exo-9 is formed by a hexameric base ring of RNase PH domain-containing subunits and a cap ring consisting of csl4, rrp4 and rrp40.</text>
</comment>
<comment type="subcellular location">
    <subcellularLocation>
        <location evidence="3">Cytoplasm</location>
    </subcellularLocation>
    <subcellularLocation>
        <location evidence="3">Nucleus</location>
        <location evidence="3">Nucleolus</location>
    </subcellularLocation>
</comment>
<comment type="similarity">
    <text evidence="4">Belongs to the RNase PH family.</text>
</comment>
<reference key="1">
    <citation type="journal article" date="2002" name="Nature">
        <title>The genome sequence of Schizosaccharomyces pombe.</title>
        <authorList>
            <person name="Wood V."/>
            <person name="Gwilliam R."/>
            <person name="Rajandream M.A."/>
            <person name="Lyne M.H."/>
            <person name="Lyne R."/>
            <person name="Stewart A."/>
            <person name="Sgouros J.G."/>
            <person name="Peat N."/>
            <person name="Hayles J."/>
            <person name="Baker S.G."/>
            <person name="Basham D."/>
            <person name="Bowman S."/>
            <person name="Brooks K."/>
            <person name="Brown D."/>
            <person name="Brown S."/>
            <person name="Chillingworth T."/>
            <person name="Churcher C.M."/>
            <person name="Collins M."/>
            <person name="Connor R."/>
            <person name="Cronin A."/>
            <person name="Davis P."/>
            <person name="Feltwell T."/>
            <person name="Fraser A."/>
            <person name="Gentles S."/>
            <person name="Goble A."/>
            <person name="Hamlin N."/>
            <person name="Harris D.E."/>
            <person name="Hidalgo J."/>
            <person name="Hodgson G."/>
            <person name="Holroyd S."/>
            <person name="Hornsby T."/>
            <person name="Howarth S."/>
            <person name="Huckle E.J."/>
            <person name="Hunt S."/>
            <person name="Jagels K."/>
            <person name="James K.D."/>
            <person name="Jones L."/>
            <person name="Jones M."/>
            <person name="Leather S."/>
            <person name="McDonald S."/>
            <person name="McLean J."/>
            <person name="Mooney P."/>
            <person name="Moule S."/>
            <person name="Mungall K.L."/>
            <person name="Murphy L.D."/>
            <person name="Niblett D."/>
            <person name="Odell C."/>
            <person name="Oliver K."/>
            <person name="O'Neil S."/>
            <person name="Pearson D."/>
            <person name="Quail M.A."/>
            <person name="Rabbinowitsch E."/>
            <person name="Rutherford K.M."/>
            <person name="Rutter S."/>
            <person name="Saunders D."/>
            <person name="Seeger K."/>
            <person name="Sharp S."/>
            <person name="Skelton J."/>
            <person name="Simmonds M.N."/>
            <person name="Squares R."/>
            <person name="Squares S."/>
            <person name="Stevens K."/>
            <person name="Taylor K."/>
            <person name="Taylor R.G."/>
            <person name="Tivey A."/>
            <person name="Walsh S.V."/>
            <person name="Warren T."/>
            <person name="Whitehead S."/>
            <person name="Woodward J.R."/>
            <person name="Volckaert G."/>
            <person name="Aert R."/>
            <person name="Robben J."/>
            <person name="Grymonprez B."/>
            <person name="Weltjens I."/>
            <person name="Vanstreels E."/>
            <person name="Rieger M."/>
            <person name="Schaefer M."/>
            <person name="Mueller-Auer S."/>
            <person name="Gabel C."/>
            <person name="Fuchs M."/>
            <person name="Duesterhoeft A."/>
            <person name="Fritzc C."/>
            <person name="Holzer E."/>
            <person name="Moestl D."/>
            <person name="Hilbert H."/>
            <person name="Borzym K."/>
            <person name="Langer I."/>
            <person name="Beck A."/>
            <person name="Lehrach H."/>
            <person name="Reinhardt R."/>
            <person name="Pohl T.M."/>
            <person name="Eger P."/>
            <person name="Zimmermann W."/>
            <person name="Wedler H."/>
            <person name="Wambutt R."/>
            <person name="Purnelle B."/>
            <person name="Goffeau A."/>
            <person name="Cadieu E."/>
            <person name="Dreano S."/>
            <person name="Gloux S."/>
            <person name="Lelaure V."/>
            <person name="Mottier S."/>
            <person name="Galibert F."/>
            <person name="Aves S.J."/>
            <person name="Xiang Z."/>
            <person name="Hunt C."/>
            <person name="Moore K."/>
            <person name="Hurst S.M."/>
            <person name="Lucas M."/>
            <person name="Rochet M."/>
            <person name="Gaillardin C."/>
            <person name="Tallada V.A."/>
            <person name="Garzon A."/>
            <person name="Thode G."/>
            <person name="Daga R.R."/>
            <person name="Cruzado L."/>
            <person name="Jimenez J."/>
            <person name="Sanchez M."/>
            <person name="del Rey F."/>
            <person name="Benito J."/>
            <person name="Dominguez A."/>
            <person name="Revuelta J.L."/>
            <person name="Moreno S."/>
            <person name="Armstrong J."/>
            <person name="Forsburg S.L."/>
            <person name="Cerutti L."/>
            <person name="Lowe T."/>
            <person name="McCombie W.R."/>
            <person name="Paulsen I."/>
            <person name="Potashkin J."/>
            <person name="Shpakovski G.V."/>
            <person name="Ussery D."/>
            <person name="Barrell B.G."/>
            <person name="Nurse P."/>
        </authorList>
    </citation>
    <scope>NUCLEOTIDE SEQUENCE [LARGE SCALE GENOMIC DNA]</scope>
    <source>
        <strain>972 / ATCC 24843</strain>
    </source>
</reference>
<reference key="2">
    <citation type="journal article" date="2006" name="Nat. Biotechnol.">
        <title>ORFeome cloning and global analysis of protein localization in the fission yeast Schizosaccharomyces pombe.</title>
        <authorList>
            <person name="Matsuyama A."/>
            <person name="Arai R."/>
            <person name="Yashiroda Y."/>
            <person name="Shirai A."/>
            <person name="Kamata A."/>
            <person name="Sekido S."/>
            <person name="Kobayashi Y."/>
            <person name="Hashimoto A."/>
            <person name="Hamamoto M."/>
            <person name="Hiraoka Y."/>
            <person name="Horinouchi S."/>
            <person name="Yoshida M."/>
        </authorList>
    </citation>
    <scope>SUBCELLULAR LOCATION [LARGE SCALE ANALYSIS]</scope>
</reference>
<dbReference type="EMBL" id="CU329671">
    <property type="protein sequence ID" value="CAA17913.1"/>
    <property type="molecule type" value="Genomic_DNA"/>
</dbReference>
<dbReference type="PIR" id="T39298">
    <property type="entry name" value="T39298"/>
</dbReference>
<dbReference type="RefSeq" id="NP_595260.1">
    <property type="nucleotide sequence ID" value="NM_001021167.2"/>
</dbReference>
<dbReference type="SMR" id="O42894"/>
<dbReference type="BioGRID" id="276215">
    <property type="interactions" value="5"/>
</dbReference>
<dbReference type="ComplexPortal" id="CPX-8914">
    <property type="entry name" value="Nucleolar exosome complex"/>
</dbReference>
<dbReference type="FunCoup" id="O42894">
    <property type="interactions" value="220"/>
</dbReference>
<dbReference type="STRING" id="284812.O42894"/>
<dbReference type="iPTMnet" id="O42894"/>
<dbReference type="PaxDb" id="4896-SPBC115.01c.1"/>
<dbReference type="EnsemblFungi" id="SPBC115.01c.1">
    <property type="protein sequence ID" value="SPBC115.01c.1:pep"/>
    <property type="gene ID" value="SPBC115.01c"/>
</dbReference>
<dbReference type="GeneID" id="2539660"/>
<dbReference type="KEGG" id="spo:2539660"/>
<dbReference type="PomBase" id="SPBC115.01c">
    <property type="gene designation" value="rrp46"/>
</dbReference>
<dbReference type="VEuPathDB" id="FungiDB:SPBC115.01c"/>
<dbReference type="eggNOG" id="KOG1069">
    <property type="taxonomic scope" value="Eukaryota"/>
</dbReference>
<dbReference type="HOGENOM" id="CLU_063514_2_1_1"/>
<dbReference type="InParanoid" id="O42894"/>
<dbReference type="OMA" id="SEWKQGS"/>
<dbReference type="PhylomeDB" id="O42894"/>
<dbReference type="Reactome" id="R-SPO-429958">
    <property type="pathway name" value="mRNA decay by 3' to 5' exoribonuclease"/>
</dbReference>
<dbReference type="Reactome" id="R-SPO-6791226">
    <property type="pathway name" value="Major pathway of rRNA processing in the nucleolus and cytosol"/>
</dbReference>
<dbReference type="PRO" id="PR:O42894"/>
<dbReference type="Proteomes" id="UP000002485">
    <property type="component" value="Chromosome II"/>
</dbReference>
<dbReference type="GO" id="GO:0000177">
    <property type="term" value="C:cytoplasmic exosome (RNase complex)"/>
    <property type="evidence" value="ECO:0000318"/>
    <property type="project" value="GO_Central"/>
</dbReference>
<dbReference type="GO" id="GO:0005829">
    <property type="term" value="C:cytosol"/>
    <property type="evidence" value="ECO:0007005"/>
    <property type="project" value="PomBase"/>
</dbReference>
<dbReference type="GO" id="GO:0000178">
    <property type="term" value="C:exosome (RNase complex)"/>
    <property type="evidence" value="ECO:0000314"/>
    <property type="project" value="PomBase"/>
</dbReference>
<dbReference type="GO" id="GO:0000176">
    <property type="term" value="C:nuclear exosome (RNase complex)"/>
    <property type="evidence" value="ECO:0000269"/>
    <property type="project" value="PomBase"/>
</dbReference>
<dbReference type="GO" id="GO:0005730">
    <property type="term" value="C:nucleolus"/>
    <property type="evidence" value="ECO:0000318"/>
    <property type="project" value="GO_Central"/>
</dbReference>
<dbReference type="GO" id="GO:0005634">
    <property type="term" value="C:nucleus"/>
    <property type="evidence" value="ECO:0007005"/>
    <property type="project" value="PomBase"/>
</dbReference>
<dbReference type="GO" id="GO:0000175">
    <property type="term" value="F:3'-5'-RNA exonuclease activity"/>
    <property type="evidence" value="ECO:0000266"/>
    <property type="project" value="PomBase"/>
</dbReference>
<dbReference type="GO" id="GO:0003723">
    <property type="term" value="F:RNA binding"/>
    <property type="evidence" value="ECO:0000318"/>
    <property type="project" value="GO_Central"/>
</dbReference>
<dbReference type="GO" id="GO:0000467">
    <property type="term" value="P:exonucleolytic trimming to generate mature 3'-end of 5.8S rRNA from tricistronic rRNA transcript (SSU-rRNA, 5.8S rRNA, LSU-rRNA)"/>
    <property type="evidence" value="ECO:0000266"/>
    <property type="project" value="PomBase"/>
</dbReference>
<dbReference type="GO" id="GO:0070651">
    <property type="term" value="P:nonfunctional rRNA decay"/>
    <property type="evidence" value="ECO:0000266"/>
    <property type="project" value="PomBase"/>
</dbReference>
<dbReference type="GO" id="GO:0071028">
    <property type="term" value="P:nuclear mRNA surveillance"/>
    <property type="evidence" value="ECO:0000318"/>
    <property type="project" value="GO_Central"/>
</dbReference>
<dbReference type="GO" id="GO:0071042">
    <property type="term" value="P:nuclear polyadenylation-dependent mRNA catabolic process"/>
    <property type="evidence" value="ECO:0000266"/>
    <property type="project" value="PomBase"/>
</dbReference>
<dbReference type="GO" id="GO:0071035">
    <property type="term" value="P:nuclear polyadenylation-dependent rRNA catabolic process"/>
    <property type="evidence" value="ECO:0000266"/>
    <property type="project" value="PomBase"/>
</dbReference>
<dbReference type="GO" id="GO:0070478">
    <property type="term" value="P:nuclear-transcribed mRNA catabolic process, 3'-5' exonucleolytic nonsense-mediated decay"/>
    <property type="evidence" value="ECO:0000266"/>
    <property type="project" value="PomBase"/>
</dbReference>
<dbReference type="GO" id="GO:0070481">
    <property type="term" value="P:nuclear-transcribed mRNA catabolic process, non-stop decay"/>
    <property type="evidence" value="ECO:0000266"/>
    <property type="project" value="PomBase"/>
</dbReference>
<dbReference type="GO" id="GO:0071051">
    <property type="term" value="P:poly(A)-dependent snoRNA 3'-end processing"/>
    <property type="evidence" value="ECO:0000318"/>
    <property type="project" value="GO_Central"/>
</dbReference>
<dbReference type="GO" id="GO:0016075">
    <property type="term" value="P:rRNA catabolic process"/>
    <property type="evidence" value="ECO:0000318"/>
    <property type="project" value="GO_Central"/>
</dbReference>
<dbReference type="GO" id="GO:0071038">
    <property type="term" value="P:TRAMP-dependent tRNA surveillance pathway"/>
    <property type="evidence" value="ECO:0000266"/>
    <property type="project" value="PomBase"/>
</dbReference>
<dbReference type="GO" id="GO:0034475">
    <property type="term" value="P:U4 snRNA 3'-end processing"/>
    <property type="evidence" value="ECO:0000318"/>
    <property type="project" value="GO_Central"/>
</dbReference>
<dbReference type="Gene3D" id="3.30.230.70">
    <property type="entry name" value="GHMP Kinase, N-terminal domain"/>
    <property type="match status" value="1"/>
</dbReference>
<dbReference type="InterPro" id="IPR001247">
    <property type="entry name" value="ExoRNase_PH_dom1"/>
</dbReference>
<dbReference type="InterPro" id="IPR027408">
    <property type="entry name" value="PNPase/RNase_PH_dom_sf"/>
</dbReference>
<dbReference type="InterPro" id="IPR020568">
    <property type="entry name" value="Ribosomal_Su5_D2-typ_SF"/>
</dbReference>
<dbReference type="InterPro" id="IPR050080">
    <property type="entry name" value="RNase_PH"/>
</dbReference>
<dbReference type="PANTHER" id="PTHR11953">
    <property type="entry name" value="EXOSOME COMPLEX COMPONENT"/>
    <property type="match status" value="1"/>
</dbReference>
<dbReference type="PANTHER" id="PTHR11953:SF1">
    <property type="entry name" value="EXOSOME COMPLEX COMPONENT RRP46"/>
    <property type="match status" value="1"/>
</dbReference>
<dbReference type="Pfam" id="PF01138">
    <property type="entry name" value="RNase_PH"/>
    <property type="match status" value="1"/>
</dbReference>
<dbReference type="SUPFAM" id="SSF54211">
    <property type="entry name" value="Ribosomal protein S5 domain 2-like"/>
    <property type="match status" value="1"/>
</dbReference>
<name>RRP46_SCHPO</name>
<proteinExistence type="inferred from homology"/>
<evidence type="ECO:0000250" key="1">
    <source>
        <dbReference type="UniProtKB" id="P53256"/>
    </source>
</evidence>
<evidence type="ECO:0000256" key="2">
    <source>
        <dbReference type="SAM" id="MobiDB-lite"/>
    </source>
</evidence>
<evidence type="ECO:0000269" key="3">
    <source>
    </source>
</evidence>
<evidence type="ECO:0000305" key="4"/>
<feature type="chain" id="PRO_0000139977" description="Exosome complex component rrp46">
    <location>
        <begin position="1"/>
        <end position="226"/>
    </location>
</feature>
<feature type="region of interest" description="Disordered" evidence="2">
    <location>
        <begin position="205"/>
        <end position="226"/>
    </location>
</feature>
<feature type="compositionally biased region" description="Basic and acidic residues" evidence="2">
    <location>
        <begin position="207"/>
        <end position="219"/>
    </location>
</feature>
<accession>O42894</accession>
<gene>
    <name type="primary">rrp46</name>
    <name type="ORF">SPBC115.01c</name>
</gene>
<protein>
    <recommendedName>
        <fullName>Exosome complex component rrp46</fullName>
    </recommendedName>
    <alternativeName>
        <fullName>Ribosomal RNA-processing protein 46</fullName>
    </alternativeName>
</protein>